<gene>
    <name evidence="5" type="primary">LECRK12</name>
    <name evidence="7" type="ordered locus">At3g45390</name>
    <name evidence="8" type="ORF">F18N11.150</name>
</gene>
<sequence length="669" mass="73887">MAQRFYLLLLLLIFLVNLICFSSQQDLSFVFNGFNQDQAGDELLLDGFARIQSPERVLQLTDGTTQQKGHAFFNRPFDFGSASSQSLSFFTQFVCALVPKPGFYGGHGIAFVLSSAHNLKKAYASSYLGLFNRSTNGSPSSHVLAVELDTVQSAETDDMDNNHVGIDENRIQSVVSASASYYSDREGKNISLILLSGDPIQVWVDYEDTLLNVTLAPLRNQKPSKPLLSRTINLTAIFPDRKAFVGFSAATGSSISNQYILGWSFSRSRRLLKSLDISELSTVPLFTEQKRKRSPLLIVLLVILTLVVIGGLGGYYLYRRKKYAEVREPWEKEYGPLRYSYESLYKATKGFNKDGRLGKGGFGEVYKGSLPLVGDIAVKRLSHNAEQGMKQFVAEVVTMGSLQHKNLVPLLGYCRRKGELLLVSKYMEGGSVDQYLFNGDKPPLSWSQRLAILRDIASALCYLHTGASQVVLHRDIKASNVMFDDHGANLSATAAVGTIGYMALELISTGTSTKTDVYAFGAFMLEVTCGRRPFDPEMPVEKRHLVKWVCECWRKHSLVDAIDTRLRDKFTLGEVEMVLKLGLLCTSIIPESRPNMEKVMQYINRDQALPDFSPDTPGIGVSTPMVMGIPGLAITSTSVTSSASVPLVSPPSTNNSMFISHTILNGDGR</sequence>
<feature type="signal peptide" evidence="2">
    <location>
        <begin position="1"/>
        <end position="24"/>
    </location>
</feature>
<feature type="chain" id="PRO_0000403071" description="Probable L-type lectin-domain containing receptor kinase I.2">
    <location>
        <begin position="25"/>
        <end position="669"/>
    </location>
</feature>
<feature type="topological domain" description="Extracellular" evidence="2">
    <location>
        <begin position="25"/>
        <end position="295"/>
    </location>
</feature>
<feature type="transmembrane region" description="Helical" evidence="2">
    <location>
        <begin position="296"/>
        <end position="316"/>
    </location>
</feature>
<feature type="topological domain" description="Cytoplasmic" evidence="2">
    <location>
        <begin position="317"/>
        <end position="669"/>
    </location>
</feature>
<feature type="domain" description="Protein kinase" evidence="3">
    <location>
        <begin position="351"/>
        <end position="609"/>
    </location>
</feature>
<feature type="region of interest" description="Legume-lectin like" evidence="2">
    <location>
        <begin position="26"/>
        <end position="266"/>
    </location>
</feature>
<feature type="active site" description="Proton acceptor" evidence="3">
    <location>
        <position position="475"/>
    </location>
</feature>
<feature type="binding site" evidence="3">
    <location>
        <begin position="357"/>
        <end position="365"/>
    </location>
    <ligand>
        <name>ATP</name>
        <dbReference type="ChEBI" id="CHEBI:30616"/>
    </ligand>
</feature>
<feature type="binding site" evidence="3">
    <location>
        <position position="379"/>
    </location>
    <ligand>
        <name>ATP</name>
        <dbReference type="ChEBI" id="CHEBI:30616"/>
    </ligand>
</feature>
<feature type="glycosylation site" description="N-linked (GlcNAc...) asparagine" evidence="2">
    <location>
        <position position="132"/>
    </location>
</feature>
<feature type="glycosylation site" description="N-linked (GlcNAc...) asparagine" evidence="2">
    <location>
        <position position="189"/>
    </location>
</feature>
<feature type="glycosylation site" description="N-linked (GlcNAc...) asparagine" evidence="2">
    <location>
        <position position="212"/>
    </location>
</feature>
<feature type="glycosylation site" description="N-linked (GlcNAc...) asparagine" evidence="2">
    <location>
        <position position="233"/>
    </location>
</feature>
<comment type="function">
    <text evidence="4">Involved in resistance response to the pathogenic fungus Alternaria brassicicola.</text>
</comment>
<comment type="catalytic activity">
    <reaction evidence="3">
        <text>L-seryl-[protein] + ATP = O-phospho-L-seryl-[protein] + ADP + H(+)</text>
        <dbReference type="Rhea" id="RHEA:17989"/>
        <dbReference type="Rhea" id="RHEA-COMP:9863"/>
        <dbReference type="Rhea" id="RHEA-COMP:11604"/>
        <dbReference type="ChEBI" id="CHEBI:15378"/>
        <dbReference type="ChEBI" id="CHEBI:29999"/>
        <dbReference type="ChEBI" id="CHEBI:30616"/>
        <dbReference type="ChEBI" id="CHEBI:83421"/>
        <dbReference type="ChEBI" id="CHEBI:456216"/>
        <dbReference type="EC" id="2.7.11.1"/>
    </reaction>
</comment>
<comment type="catalytic activity">
    <reaction evidence="3">
        <text>L-threonyl-[protein] + ATP = O-phospho-L-threonyl-[protein] + ADP + H(+)</text>
        <dbReference type="Rhea" id="RHEA:46608"/>
        <dbReference type="Rhea" id="RHEA-COMP:11060"/>
        <dbReference type="Rhea" id="RHEA-COMP:11605"/>
        <dbReference type="ChEBI" id="CHEBI:15378"/>
        <dbReference type="ChEBI" id="CHEBI:30013"/>
        <dbReference type="ChEBI" id="CHEBI:30616"/>
        <dbReference type="ChEBI" id="CHEBI:61977"/>
        <dbReference type="ChEBI" id="CHEBI:456216"/>
        <dbReference type="EC" id="2.7.11.1"/>
    </reaction>
</comment>
<comment type="subcellular location">
    <subcellularLocation>
        <location evidence="1">Cell membrane</location>
        <topology evidence="2">Single-pass type I membrane protein</topology>
    </subcellularLocation>
</comment>
<comment type="disruption phenotype">
    <text evidence="4">Increased susceptibility to the fungus Alternaria brassicicola.</text>
</comment>
<comment type="similarity">
    <text evidence="6">In the C-terminal section; belongs to the protein kinase superfamily. Ser/Thr protein kinase family.</text>
</comment>
<comment type="similarity">
    <text evidence="6">In the N-terminal section; belongs to the leguminous lectin family.</text>
</comment>
<comment type="sequence caution" evidence="6">
    <conflict type="erroneous gene model prediction">
        <sequence resource="EMBL-CDS" id="CAB72488"/>
    </conflict>
</comment>
<evidence type="ECO:0000250" key="1">
    <source>
        <dbReference type="UniProtKB" id="Q9LSR8"/>
    </source>
</evidence>
<evidence type="ECO:0000255" key="2"/>
<evidence type="ECO:0000255" key="3">
    <source>
        <dbReference type="PROSITE-ProRule" id="PRU00159"/>
    </source>
</evidence>
<evidence type="ECO:0000269" key="4">
    <source>
    </source>
</evidence>
<evidence type="ECO:0000303" key="5">
    <source>
    </source>
</evidence>
<evidence type="ECO:0000305" key="6"/>
<evidence type="ECO:0000312" key="7">
    <source>
        <dbReference type="Araport" id="AT3G45390"/>
    </source>
</evidence>
<evidence type="ECO:0000312" key="8">
    <source>
        <dbReference type="EMBL" id="CAB72488.1"/>
    </source>
</evidence>
<reference key="1">
    <citation type="journal article" date="2000" name="Nature">
        <title>Sequence and analysis of chromosome 3 of the plant Arabidopsis thaliana.</title>
        <authorList>
            <person name="Salanoubat M."/>
            <person name="Lemcke K."/>
            <person name="Rieger M."/>
            <person name="Ansorge W."/>
            <person name="Unseld M."/>
            <person name="Fartmann B."/>
            <person name="Valle G."/>
            <person name="Bloecker H."/>
            <person name="Perez-Alonso M."/>
            <person name="Obermaier B."/>
            <person name="Delseny M."/>
            <person name="Boutry M."/>
            <person name="Grivell L.A."/>
            <person name="Mache R."/>
            <person name="Puigdomenech P."/>
            <person name="De Simone V."/>
            <person name="Choisne N."/>
            <person name="Artiguenave F."/>
            <person name="Robert C."/>
            <person name="Brottier P."/>
            <person name="Wincker P."/>
            <person name="Cattolico L."/>
            <person name="Weissenbach J."/>
            <person name="Saurin W."/>
            <person name="Quetier F."/>
            <person name="Schaefer M."/>
            <person name="Mueller-Auer S."/>
            <person name="Gabel C."/>
            <person name="Fuchs M."/>
            <person name="Benes V."/>
            <person name="Wurmbach E."/>
            <person name="Drzonek H."/>
            <person name="Erfle H."/>
            <person name="Jordan N."/>
            <person name="Bangert S."/>
            <person name="Wiedelmann R."/>
            <person name="Kranz H."/>
            <person name="Voss H."/>
            <person name="Holland R."/>
            <person name="Brandt P."/>
            <person name="Nyakatura G."/>
            <person name="Vezzi A."/>
            <person name="D'Angelo M."/>
            <person name="Pallavicini A."/>
            <person name="Toppo S."/>
            <person name="Simionati B."/>
            <person name="Conrad A."/>
            <person name="Hornischer K."/>
            <person name="Kauer G."/>
            <person name="Loehnert T.-H."/>
            <person name="Nordsiek G."/>
            <person name="Reichelt J."/>
            <person name="Scharfe M."/>
            <person name="Schoen O."/>
            <person name="Bargues M."/>
            <person name="Terol J."/>
            <person name="Climent J."/>
            <person name="Navarro P."/>
            <person name="Collado C."/>
            <person name="Perez-Perez A."/>
            <person name="Ottenwaelder B."/>
            <person name="Duchemin D."/>
            <person name="Cooke R."/>
            <person name="Laudie M."/>
            <person name="Berger-Llauro C."/>
            <person name="Purnelle B."/>
            <person name="Masuy D."/>
            <person name="de Haan M."/>
            <person name="Maarse A.C."/>
            <person name="Alcaraz J.-P."/>
            <person name="Cottet A."/>
            <person name="Casacuberta E."/>
            <person name="Monfort A."/>
            <person name="Argiriou A."/>
            <person name="Flores M."/>
            <person name="Liguori R."/>
            <person name="Vitale D."/>
            <person name="Mannhaupt G."/>
            <person name="Haase D."/>
            <person name="Schoof H."/>
            <person name="Rudd S."/>
            <person name="Zaccaria P."/>
            <person name="Mewes H.-W."/>
            <person name="Mayer K.F.X."/>
            <person name="Kaul S."/>
            <person name="Town C.D."/>
            <person name="Koo H.L."/>
            <person name="Tallon L.J."/>
            <person name="Jenkins J."/>
            <person name="Rooney T."/>
            <person name="Rizzo M."/>
            <person name="Walts A."/>
            <person name="Utterback T."/>
            <person name="Fujii C.Y."/>
            <person name="Shea T.P."/>
            <person name="Creasy T.H."/>
            <person name="Haas B."/>
            <person name="Maiti R."/>
            <person name="Wu D."/>
            <person name="Peterson J."/>
            <person name="Van Aken S."/>
            <person name="Pai G."/>
            <person name="Militscher J."/>
            <person name="Sellers P."/>
            <person name="Gill J.E."/>
            <person name="Feldblyum T.V."/>
            <person name="Preuss D."/>
            <person name="Lin X."/>
            <person name="Nierman W.C."/>
            <person name="Salzberg S.L."/>
            <person name="White O."/>
            <person name="Venter J.C."/>
            <person name="Fraser C.M."/>
            <person name="Kaneko T."/>
            <person name="Nakamura Y."/>
            <person name="Sato S."/>
            <person name="Kato T."/>
            <person name="Asamizu E."/>
            <person name="Sasamoto S."/>
            <person name="Kimura T."/>
            <person name="Idesawa K."/>
            <person name="Kawashima K."/>
            <person name="Kishida Y."/>
            <person name="Kiyokawa C."/>
            <person name="Kohara M."/>
            <person name="Matsumoto M."/>
            <person name="Matsuno A."/>
            <person name="Muraki A."/>
            <person name="Nakayama S."/>
            <person name="Nakazaki N."/>
            <person name="Shinpo S."/>
            <person name="Takeuchi C."/>
            <person name="Wada T."/>
            <person name="Watanabe A."/>
            <person name="Yamada M."/>
            <person name="Yasuda M."/>
            <person name="Tabata S."/>
        </authorList>
    </citation>
    <scope>NUCLEOTIDE SEQUENCE [LARGE SCALE GENOMIC DNA]</scope>
    <source>
        <strain>cv. Columbia</strain>
    </source>
</reference>
<reference key="2">
    <citation type="journal article" date="2017" name="Plant J.">
        <title>Araport11: a complete reannotation of the Arabidopsis thaliana reference genome.</title>
        <authorList>
            <person name="Cheng C.Y."/>
            <person name="Krishnakumar V."/>
            <person name="Chan A.P."/>
            <person name="Thibaud-Nissen F."/>
            <person name="Schobel S."/>
            <person name="Town C.D."/>
        </authorList>
    </citation>
    <scope>GENOME REANNOTATION</scope>
    <source>
        <strain>cv. Columbia</strain>
    </source>
</reference>
<reference key="3">
    <citation type="journal article" date="2002" name="Crit. Rev. Plant Sci.">
        <title>Lectin receptor kinases in plants.</title>
        <authorList>
            <person name="Barre A."/>
            <person name="Herve C."/>
            <person name="Lescure B."/>
            <person name="Rouge P."/>
        </authorList>
    </citation>
    <scope>GENE FAMILY</scope>
</reference>
<reference key="4">
    <citation type="journal article" date="2009" name="J. Exp. Bot.">
        <title>Arabidopsis L-type lectin receptor kinases: phylogeny, classification, and expression profiles.</title>
        <authorList>
            <person name="Bouwmeester K."/>
            <person name="Govers F."/>
        </authorList>
    </citation>
    <scope>GENE FAMILY</scope>
    <scope>NOMENCLATURE</scope>
</reference>
<reference key="5">
    <citation type="journal article" date="2014" name="Mol. Plant Microbe Interact.">
        <title>Phenotypic analyses of Arabidopsis T-DNA insertion lines and expression profiling reveal that multiple L-type lectin receptor kinases are involved in plant immunity.</title>
        <authorList>
            <person name="Wang Y."/>
            <person name="Bouwmeester K."/>
            <person name="Beseh P."/>
            <person name="Shan W."/>
            <person name="Govers F."/>
        </authorList>
    </citation>
    <scope>FUNCTION</scope>
    <scope>DISRUPTION PHENOTYPE</scope>
    <source>
        <strain>cv. Columbia</strain>
    </source>
</reference>
<proteinExistence type="evidence at transcript level"/>
<organism>
    <name type="scientific">Arabidopsis thaliana</name>
    <name type="common">Mouse-ear cress</name>
    <dbReference type="NCBI Taxonomy" id="3702"/>
    <lineage>
        <taxon>Eukaryota</taxon>
        <taxon>Viridiplantae</taxon>
        <taxon>Streptophyta</taxon>
        <taxon>Embryophyta</taxon>
        <taxon>Tracheophyta</taxon>
        <taxon>Spermatophyta</taxon>
        <taxon>Magnoliopsida</taxon>
        <taxon>eudicotyledons</taxon>
        <taxon>Gunneridae</taxon>
        <taxon>Pentapetalae</taxon>
        <taxon>rosids</taxon>
        <taxon>malvids</taxon>
        <taxon>Brassicales</taxon>
        <taxon>Brassicaceae</taxon>
        <taxon>Camelineae</taxon>
        <taxon>Arabidopsis</taxon>
    </lineage>
</organism>
<name>LRK12_ARATH</name>
<accession>Q7FK82</accession>
<accession>F4J5K3</accession>
<protein>
    <recommendedName>
        <fullName evidence="5">Probable L-type lectin-domain containing receptor kinase I.2</fullName>
        <shortName evidence="5">LecRK-I.2</shortName>
        <ecNumber evidence="3">2.7.11.1</ecNumber>
    </recommendedName>
</protein>
<keyword id="KW-0067">ATP-binding</keyword>
<keyword id="KW-1003">Cell membrane</keyword>
<keyword id="KW-0325">Glycoprotein</keyword>
<keyword id="KW-0418">Kinase</keyword>
<keyword id="KW-0430">Lectin</keyword>
<keyword id="KW-0472">Membrane</keyword>
<keyword id="KW-0547">Nucleotide-binding</keyword>
<keyword id="KW-0611">Plant defense</keyword>
<keyword id="KW-0675">Receptor</keyword>
<keyword id="KW-1185">Reference proteome</keyword>
<keyword id="KW-0723">Serine/threonine-protein kinase</keyword>
<keyword id="KW-0732">Signal</keyword>
<keyword id="KW-0808">Transferase</keyword>
<keyword id="KW-0812">Transmembrane</keyword>
<keyword id="KW-1133">Transmembrane helix</keyword>
<dbReference type="EC" id="2.7.11.1" evidence="3"/>
<dbReference type="EMBL" id="AL132953">
    <property type="protein sequence ID" value="CAB72488.1"/>
    <property type="status" value="ALT_SEQ"/>
    <property type="molecule type" value="Genomic_DNA"/>
</dbReference>
<dbReference type="EMBL" id="CP002686">
    <property type="protein sequence ID" value="AEE78025.2"/>
    <property type="molecule type" value="Genomic_DNA"/>
</dbReference>
<dbReference type="PIR" id="T47479">
    <property type="entry name" value="T47479"/>
</dbReference>
<dbReference type="RefSeq" id="NP_001319689.1">
    <property type="nucleotide sequence ID" value="NM_001339204.1"/>
</dbReference>
<dbReference type="SMR" id="Q7FK82"/>
<dbReference type="GlyCosmos" id="Q7FK82">
    <property type="glycosylation" value="4 sites, No reported glycans"/>
</dbReference>
<dbReference type="GlyGen" id="Q7FK82">
    <property type="glycosylation" value="4 sites"/>
</dbReference>
<dbReference type="EnsemblPlants" id="AT3G45390.1">
    <property type="protein sequence ID" value="AT3G45390.1"/>
    <property type="gene ID" value="AT3G45390"/>
</dbReference>
<dbReference type="GeneID" id="823677"/>
<dbReference type="Gramene" id="AT3G45390.1">
    <property type="protein sequence ID" value="AT3G45390.1"/>
    <property type="gene ID" value="AT3G45390"/>
</dbReference>
<dbReference type="KEGG" id="ath:AT3G45390"/>
<dbReference type="Araport" id="AT3G45390"/>
<dbReference type="TAIR" id="AT3G45390">
    <property type="gene designation" value="LECRK-I.2"/>
</dbReference>
<dbReference type="eggNOG" id="ENOG502QSJ4">
    <property type="taxonomic scope" value="Eukaryota"/>
</dbReference>
<dbReference type="InParanoid" id="Q7FK82"/>
<dbReference type="PhylomeDB" id="Q7FK82"/>
<dbReference type="PRO" id="PR:Q7FK82"/>
<dbReference type="Proteomes" id="UP000006548">
    <property type="component" value="Chromosome 3"/>
</dbReference>
<dbReference type="ExpressionAtlas" id="Q7FK82">
    <property type="expression patterns" value="baseline and differential"/>
</dbReference>
<dbReference type="GO" id="GO:0005886">
    <property type="term" value="C:plasma membrane"/>
    <property type="evidence" value="ECO:0000250"/>
    <property type="project" value="UniProtKB"/>
</dbReference>
<dbReference type="GO" id="GO:0005524">
    <property type="term" value="F:ATP binding"/>
    <property type="evidence" value="ECO:0007669"/>
    <property type="project" value="UniProtKB-KW"/>
</dbReference>
<dbReference type="GO" id="GO:0030246">
    <property type="term" value="F:carbohydrate binding"/>
    <property type="evidence" value="ECO:0007669"/>
    <property type="project" value="UniProtKB-KW"/>
</dbReference>
<dbReference type="GO" id="GO:0106310">
    <property type="term" value="F:protein serine kinase activity"/>
    <property type="evidence" value="ECO:0007669"/>
    <property type="project" value="RHEA"/>
</dbReference>
<dbReference type="GO" id="GO:0004674">
    <property type="term" value="F:protein serine/threonine kinase activity"/>
    <property type="evidence" value="ECO:0007669"/>
    <property type="project" value="UniProtKB-KW"/>
</dbReference>
<dbReference type="GO" id="GO:0050832">
    <property type="term" value="P:defense response to fungus"/>
    <property type="evidence" value="ECO:0000315"/>
    <property type="project" value="UniProtKB"/>
</dbReference>
<dbReference type="CDD" id="cd06899">
    <property type="entry name" value="lectin_legume_LecRK_Arcelin_ConA"/>
    <property type="match status" value="1"/>
</dbReference>
<dbReference type="FunFam" id="3.30.200.20:FF:000451">
    <property type="entry name" value="L-type lectin-domain containing receptor kinase I.9"/>
    <property type="match status" value="1"/>
</dbReference>
<dbReference type="FunFam" id="1.10.510.10:FF:000108">
    <property type="entry name" value="L-type lectin-domain containing receptor kinase S.4"/>
    <property type="match status" value="1"/>
</dbReference>
<dbReference type="FunFam" id="2.60.120.200:FF:000096">
    <property type="entry name" value="L-type lectin-domain containing receptor kinase V.9"/>
    <property type="match status" value="1"/>
</dbReference>
<dbReference type="Gene3D" id="2.60.120.200">
    <property type="match status" value="1"/>
</dbReference>
<dbReference type="Gene3D" id="3.30.200.20">
    <property type="entry name" value="Phosphorylase Kinase, domain 1"/>
    <property type="match status" value="1"/>
</dbReference>
<dbReference type="Gene3D" id="1.10.510.10">
    <property type="entry name" value="Transferase(Phosphotransferase) domain 1"/>
    <property type="match status" value="1"/>
</dbReference>
<dbReference type="InterPro" id="IPR013320">
    <property type="entry name" value="ConA-like_dom_sf"/>
</dbReference>
<dbReference type="InterPro" id="IPR011009">
    <property type="entry name" value="Kinase-like_dom_sf"/>
</dbReference>
<dbReference type="InterPro" id="IPR050528">
    <property type="entry name" value="L-type_Lectin-RKs"/>
</dbReference>
<dbReference type="InterPro" id="IPR001220">
    <property type="entry name" value="Legume_lectin_dom"/>
</dbReference>
<dbReference type="InterPro" id="IPR000719">
    <property type="entry name" value="Prot_kinase_dom"/>
</dbReference>
<dbReference type="InterPro" id="IPR017441">
    <property type="entry name" value="Protein_kinase_ATP_BS"/>
</dbReference>
<dbReference type="InterPro" id="IPR001245">
    <property type="entry name" value="Ser-Thr/Tyr_kinase_cat_dom"/>
</dbReference>
<dbReference type="InterPro" id="IPR008271">
    <property type="entry name" value="Ser/Thr_kinase_AS"/>
</dbReference>
<dbReference type="PANTHER" id="PTHR27007">
    <property type="match status" value="1"/>
</dbReference>
<dbReference type="Pfam" id="PF00139">
    <property type="entry name" value="Lectin_legB"/>
    <property type="match status" value="1"/>
</dbReference>
<dbReference type="Pfam" id="PF07714">
    <property type="entry name" value="PK_Tyr_Ser-Thr"/>
    <property type="match status" value="1"/>
</dbReference>
<dbReference type="SMART" id="SM00220">
    <property type="entry name" value="S_TKc"/>
    <property type="match status" value="1"/>
</dbReference>
<dbReference type="SUPFAM" id="SSF49899">
    <property type="entry name" value="Concanavalin A-like lectins/glucanases"/>
    <property type="match status" value="1"/>
</dbReference>
<dbReference type="SUPFAM" id="SSF56112">
    <property type="entry name" value="Protein kinase-like (PK-like)"/>
    <property type="match status" value="1"/>
</dbReference>
<dbReference type="PROSITE" id="PS00307">
    <property type="entry name" value="LECTIN_LEGUME_BETA"/>
    <property type="match status" value="1"/>
</dbReference>
<dbReference type="PROSITE" id="PS00107">
    <property type="entry name" value="PROTEIN_KINASE_ATP"/>
    <property type="match status" value="1"/>
</dbReference>
<dbReference type="PROSITE" id="PS50011">
    <property type="entry name" value="PROTEIN_KINASE_DOM"/>
    <property type="match status" value="1"/>
</dbReference>
<dbReference type="PROSITE" id="PS00108">
    <property type="entry name" value="PROTEIN_KINASE_ST"/>
    <property type="match status" value="1"/>
</dbReference>